<reference key="1">
    <citation type="journal article" date="1999" name="Nature">
        <title>Sequence and analysis of chromosome 2 of the plant Arabidopsis thaliana.</title>
        <authorList>
            <person name="Lin X."/>
            <person name="Kaul S."/>
            <person name="Rounsley S.D."/>
            <person name="Shea T.P."/>
            <person name="Benito M.-I."/>
            <person name="Town C.D."/>
            <person name="Fujii C.Y."/>
            <person name="Mason T.M."/>
            <person name="Bowman C.L."/>
            <person name="Barnstead M.E."/>
            <person name="Feldblyum T.V."/>
            <person name="Buell C.R."/>
            <person name="Ketchum K.A."/>
            <person name="Lee J.J."/>
            <person name="Ronning C.M."/>
            <person name="Koo H.L."/>
            <person name="Moffat K.S."/>
            <person name="Cronin L.A."/>
            <person name="Shen M."/>
            <person name="Pai G."/>
            <person name="Van Aken S."/>
            <person name="Umayam L."/>
            <person name="Tallon L.J."/>
            <person name="Gill J.E."/>
            <person name="Adams M.D."/>
            <person name="Carrera A.J."/>
            <person name="Creasy T.H."/>
            <person name="Goodman H.M."/>
            <person name="Somerville C.R."/>
            <person name="Copenhaver G.P."/>
            <person name="Preuss D."/>
            <person name="Nierman W.C."/>
            <person name="White O."/>
            <person name="Eisen J.A."/>
            <person name="Salzberg S.L."/>
            <person name="Fraser C.M."/>
            <person name="Venter J.C."/>
        </authorList>
    </citation>
    <scope>NUCLEOTIDE SEQUENCE [LARGE SCALE GENOMIC DNA]</scope>
    <source>
        <strain>cv. Columbia</strain>
    </source>
</reference>
<reference key="2">
    <citation type="journal article" date="2017" name="Plant J.">
        <title>Araport11: a complete reannotation of the Arabidopsis thaliana reference genome.</title>
        <authorList>
            <person name="Cheng C.Y."/>
            <person name="Krishnakumar V."/>
            <person name="Chan A.P."/>
            <person name="Thibaud-Nissen F."/>
            <person name="Schobel S."/>
            <person name="Town C.D."/>
        </authorList>
    </citation>
    <scope>GENOME REANNOTATION</scope>
    <source>
        <strain>cv. Columbia</strain>
    </source>
</reference>
<reference key="3">
    <citation type="submission" date="2006-07" db="EMBL/GenBank/DDBJ databases">
        <title>Large-scale analysis of RIKEN Arabidopsis full-length (RAFL) cDNAs.</title>
        <authorList>
            <person name="Totoki Y."/>
            <person name="Seki M."/>
            <person name="Ishida J."/>
            <person name="Nakajima M."/>
            <person name="Enju A."/>
            <person name="Kamiya A."/>
            <person name="Narusaka M."/>
            <person name="Shin-i T."/>
            <person name="Nakagawa M."/>
            <person name="Sakamoto N."/>
            <person name="Oishi K."/>
            <person name="Kohara Y."/>
            <person name="Kobayashi M."/>
            <person name="Toyoda A."/>
            <person name="Sakaki Y."/>
            <person name="Sakurai T."/>
            <person name="Iida K."/>
            <person name="Akiyama K."/>
            <person name="Satou M."/>
            <person name="Toyoda T."/>
            <person name="Konagaya A."/>
            <person name="Carninci P."/>
            <person name="Kawai J."/>
            <person name="Hayashizaki Y."/>
            <person name="Shinozaki K."/>
        </authorList>
    </citation>
    <scope>NUCLEOTIDE SEQUENCE [LARGE SCALE MRNA]</scope>
    <source>
        <strain>cv. Columbia</strain>
    </source>
</reference>
<reference key="4">
    <citation type="journal article" date="2001" name="BMC Genomics">
        <title>Kinesins in the Arabidopsis genome: a comparative analysis among eukaryotes.</title>
        <authorList>
            <person name="Reddy A.S."/>
            <person name="Day I.S."/>
        </authorList>
    </citation>
    <scope>GENE FAMILY</scope>
</reference>
<reference key="5">
    <citation type="journal article" date="2006" name="BMC Genomics">
        <title>Comprehensive comparative analysis of kinesins in photosynthetic eukaryotes.</title>
        <authorList>
            <person name="Richardson D.N."/>
            <person name="Simmons M.P."/>
            <person name="Reddy A.S."/>
        </authorList>
    </citation>
    <scope>GENE FAMILY</scope>
    <scope>NOMENCLATURE</scope>
</reference>
<reference key="6">
    <citation type="journal article" date="2006" name="Trends Plant Sci.">
        <title>Mitosis-specific kinesins in Arabidopsis.</title>
        <authorList>
            <person name="Vanstraelen M."/>
            <person name="Inze D."/>
            <person name="Geelen D."/>
        </authorList>
    </citation>
    <scope>REVIEW</scope>
</reference>
<reference key="7">
    <citation type="journal article" date="2012" name="Protoplasma">
        <title>Functions of the Arabidopsis kinesin superfamily of microtubule-based motor proteins.</title>
        <authorList>
            <person name="Zhu C."/>
            <person name="Dixit R."/>
        </authorList>
    </citation>
    <scope>REVIEW</scope>
</reference>
<evidence type="ECO:0000250" key="1">
    <source>
        <dbReference type="UniProtKB" id="F4IIS5"/>
    </source>
</evidence>
<evidence type="ECO:0000250" key="2">
    <source>
        <dbReference type="UniProtKB" id="O23826"/>
    </source>
</evidence>
<evidence type="ECO:0000255" key="3">
    <source>
        <dbReference type="PROSITE-ProRule" id="PRU00283"/>
    </source>
</evidence>
<evidence type="ECO:0000256" key="4">
    <source>
        <dbReference type="SAM" id="MobiDB-lite"/>
    </source>
</evidence>
<evidence type="ECO:0000303" key="5">
    <source>
    </source>
</evidence>
<evidence type="ECO:0000303" key="6">
    <source>
    </source>
</evidence>
<evidence type="ECO:0000305" key="7"/>
<evidence type="ECO:0000312" key="8">
    <source>
        <dbReference type="Araport" id="AT2G37420"/>
    </source>
</evidence>
<evidence type="ECO:0000312" key="9">
    <source>
        <dbReference type="EMBL" id="AAC98061.1"/>
    </source>
</evidence>
<comment type="function">
    <text evidence="1 2">Responsible for microtubule translocation. May be important for the organization of phragmoplast-specific arrays of microtubules (By similarity). Plays an essential role in stabilizing the mitotic spindle. Required during mitotic cytokinesis (By similarity).</text>
</comment>
<comment type="subcellular location">
    <subcellularLocation>
        <location evidence="1">Cytoplasm</location>
        <location evidence="1">Cytoskeleton</location>
    </subcellularLocation>
    <subcellularLocation>
        <location evidence="1">Cytoplasm</location>
        <location evidence="1">Cytoskeleton</location>
        <location evidence="1">Spindle</location>
    </subcellularLocation>
    <text evidence="1">Microtubule-associated.</text>
</comment>
<comment type="similarity">
    <text evidence="6">Belongs to the TRAFAC class myosin-kinesin ATPase superfamily. Kinesin family. KIN-5/BimC subfamily.</text>
</comment>
<comment type="sequence caution" evidence="7">
    <conflict type="erroneous gene model prediction">
        <sequence resource="EMBL-CDS" id="AAC98061"/>
    </conflict>
</comment>
<sequence length="1039" mass="117581">MSFTPEVVSRKSGVGVIPSPAPFLTPRLERRRPDSFSNRLDRDNKEVNVQVILRCKPLSEEEQKSSVPRVISCNEMRREVNVLHTIANKQVDRLFNFDKVFGPKSQQRSIYDQAIAPIVHEVLEGFSCTVFAYGQTGTGKTYTMEGGMRKKGGDLPAEAGVIPRAVRHIFDTLEAQNADYSMKVTFLELYNEEVTDLLAQDDSSRSSEDKQRKPISLMEDGKGSVVLRGLEEEVVYSANDIYALLERGSSKRRTADTLLNKRSSRSHSVFTITVHIKEESMGDEELIKCGKLNLVDLAGSENILRSGARDGRAREAGEINKSLLTLGRVINALVEHSSHVPYRDSKLTRLLRDSLGGKTKTCIIATISPSAHSLEETLSTLDYAYRAKNIKNKPEANQKLSKAVLLKDLYLELERMKEDVRAARDKNGVYIAHERYTQEEVEKKARIERIEQLENELNLSESEVSKFCDLYETEKEKLLDVESDLKDCKRNLHNSNKDLLDLKENYIQVVSKLKEKEVIVSRMKASETSLIDRAKGLRCDLQHASNDINSLFTRLDQKDKLESDNQSMLLKFGSQLDQNLKDLHRTVLGSVSQQQQQLRTMEEHTHSFLAHKYDATRDLESRIGKTSDTYTSGIAALKELSEMLQKKASSDLEKKNTSIVSQIEAVEKFLTTSATEASAVAQDIHNLLNDQKKLLALAARQQEQGLVRSMRSAQEISNSTSTIFSNIYNQAHDVVEAIRASQAEKSRQLDAFEMKFKEEAEREEKQALNDISLILSKLTSKKTAMISDASSNIREHDIQEEKRLYEQMSGMQQVSIGAKEELCDYLKKEKTHFTENTIASAESITVMDSYLEDCLGRANDSKTLWETTETGIKNLNTKYQQELNVTMEDMAKENEKVQDEFTSTFSSMDANFVSRTNELHAAVNDSLMQDRENKETTEAIVETCMNQVTLLQENHGQAVSNIRNKAEQSLIKDYQVDQHKNETPKKQSINVPSLDSIEEMRTLFSQNTLSEEHTSLEKISTKQGLGEANNRTPFLEVNK</sequence>
<keyword id="KW-0067">ATP-binding</keyword>
<keyword id="KW-0963">Cytoplasm</keyword>
<keyword id="KW-0206">Cytoskeleton</keyword>
<keyword id="KW-0493">Microtubule</keyword>
<keyword id="KW-0505">Motor protein</keyword>
<keyword id="KW-0547">Nucleotide-binding</keyword>
<keyword id="KW-1185">Reference proteome</keyword>
<organism>
    <name type="scientific">Arabidopsis thaliana</name>
    <name type="common">Mouse-ear cress</name>
    <dbReference type="NCBI Taxonomy" id="3702"/>
    <lineage>
        <taxon>Eukaryota</taxon>
        <taxon>Viridiplantae</taxon>
        <taxon>Streptophyta</taxon>
        <taxon>Embryophyta</taxon>
        <taxon>Tracheophyta</taxon>
        <taxon>Spermatophyta</taxon>
        <taxon>Magnoliopsida</taxon>
        <taxon>eudicotyledons</taxon>
        <taxon>Gunneridae</taxon>
        <taxon>Pentapetalae</taxon>
        <taxon>rosids</taxon>
        <taxon>malvids</taxon>
        <taxon>Brassicales</taxon>
        <taxon>Brassicaceae</taxon>
        <taxon>Camelineae</taxon>
        <taxon>Arabidopsis</taxon>
    </lineage>
</organism>
<gene>
    <name evidence="7" type="primary">KIN5B</name>
    <name evidence="8" type="ordered locus">At2g37420</name>
    <name evidence="9" type="ORF">F3G5.21</name>
</gene>
<name>KN5B_ARATH</name>
<accession>Q0WQJ7</accession>
<accession>Q9ZUS4</accession>
<dbReference type="EMBL" id="AC005896">
    <property type="protein sequence ID" value="AAC98061.1"/>
    <property type="status" value="ALT_SEQ"/>
    <property type="molecule type" value="Genomic_DNA"/>
</dbReference>
<dbReference type="EMBL" id="CP002685">
    <property type="protein sequence ID" value="AEC09396.1"/>
    <property type="molecule type" value="Genomic_DNA"/>
</dbReference>
<dbReference type="EMBL" id="CP002685">
    <property type="protein sequence ID" value="ANM61462.1"/>
    <property type="molecule type" value="Genomic_DNA"/>
</dbReference>
<dbReference type="EMBL" id="AK228698">
    <property type="protein sequence ID" value="BAF00602.1"/>
    <property type="molecule type" value="mRNA"/>
</dbReference>
<dbReference type="PIR" id="E84792">
    <property type="entry name" value="E84792"/>
</dbReference>
<dbReference type="RefSeq" id="NP_001323679.1">
    <property type="nucleotide sequence ID" value="NM_001336659.1"/>
</dbReference>
<dbReference type="RefSeq" id="NP_850281.1">
    <property type="nucleotide sequence ID" value="NM_179950.3"/>
</dbReference>
<dbReference type="SMR" id="Q0WQJ7"/>
<dbReference type="FunCoup" id="Q0WQJ7">
    <property type="interactions" value="2325"/>
</dbReference>
<dbReference type="STRING" id="3702.Q0WQJ7"/>
<dbReference type="PaxDb" id="3702-AT2G37420.1"/>
<dbReference type="ProteomicsDB" id="238227"/>
<dbReference type="EnsemblPlants" id="AT2G37420.1">
    <property type="protein sequence ID" value="AT2G37420.1"/>
    <property type="gene ID" value="AT2G37420"/>
</dbReference>
<dbReference type="EnsemblPlants" id="AT2G37420.2">
    <property type="protein sequence ID" value="AT2G37420.2"/>
    <property type="gene ID" value="AT2G37420"/>
</dbReference>
<dbReference type="GeneID" id="818318"/>
<dbReference type="Gramene" id="AT2G37420.1">
    <property type="protein sequence ID" value="AT2G37420.1"/>
    <property type="gene ID" value="AT2G37420"/>
</dbReference>
<dbReference type="Gramene" id="AT2G37420.2">
    <property type="protein sequence ID" value="AT2G37420.2"/>
    <property type="gene ID" value="AT2G37420"/>
</dbReference>
<dbReference type="KEGG" id="ath:AT2G37420"/>
<dbReference type="Araport" id="AT2G37420"/>
<dbReference type="TAIR" id="AT2G37420"/>
<dbReference type="eggNOG" id="KOG0243">
    <property type="taxonomic scope" value="Eukaryota"/>
</dbReference>
<dbReference type="HOGENOM" id="CLU_001485_33_0_1"/>
<dbReference type="InParanoid" id="Q0WQJ7"/>
<dbReference type="OMA" id="DCEANVQ"/>
<dbReference type="PhylomeDB" id="Q0WQJ7"/>
<dbReference type="PRO" id="PR:Q0WQJ7"/>
<dbReference type="Proteomes" id="UP000006548">
    <property type="component" value="Chromosome 2"/>
</dbReference>
<dbReference type="ExpressionAtlas" id="Q0WQJ7">
    <property type="expression patterns" value="baseline and differential"/>
</dbReference>
<dbReference type="GO" id="GO:0005737">
    <property type="term" value="C:cytoplasm"/>
    <property type="evidence" value="ECO:0007669"/>
    <property type="project" value="UniProtKB-KW"/>
</dbReference>
<dbReference type="GO" id="GO:0005874">
    <property type="term" value="C:microtubule"/>
    <property type="evidence" value="ECO:0007669"/>
    <property type="project" value="UniProtKB-KW"/>
</dbReference>
<dbReference type="GO" id="GO:0005819">
    <property type="term" value="C:spindle"/>
    <property type="evidence" value="ECO:0007669"/>
    <property type="project" value="UniProtKB-SubCell"/>
</dbReference>
<dbReference type="GO" id="GO:0005524">
    <property type="term" value="F:ATP binding"/>
    <property type="evidence" value="ECO:0007669"/>
    <property type="project" value="UniProtKB-KW"/>
</dbReference>
<dbReference type="GO" id="GO:0008017">
    <property type="term" value="F:microtubule binding"/>
    <property type="evidence" value="ECO:0007669"/>
    <property type="project" value="InterPro"/>
</dbReference>
<dbReference type="GO" id="GO:0003777">
    <property type="term" value="F:microtubule motor activity"/>
    <property type="evidence" value="ECO:0007669"/>
    <property type="project" value="InterPro"/>
</dbReference>
<dbReference type="GO" id="GO:0007018">
    <property type="term" value="P:microtubule-based movement"/>
    <property type="evidence" value="ECO:0007669"/>
    <property type="project" value="InterPro"/>
</dbReference>
<dbReference type="CDD" id="cd01364">
    <property type="entry name" value="KISc_BimC_Eg5"/>
    <property type="match status" value="1"/>
</dbReference>
<dbReference type="FunFam" id="3.40.850.10:FF:000019">
    <property type="entry name" value="Kinesin-like protein KIN-5D"/>
    <property type="match status" value="1"/>
</dbReference>
<dbReference type="Gene3D" id="3.40.850.10">
    <property type="entry name" value="Kinesin motor domain"/>
    <property type="match status" value="1"/>
</dbReference>
<dbReference type="InterPro" id="IPR047149">
    <property type="entry name" value="KIF11-like"/>
</dbReference>
<dbReference type="InterPro" id="IPR047241">
    <property type="entry name" value="KIF11-like_kin_motor_dom"/>
</dbReference>
<dbReference type="InterPro" id="IPR019821">
    <property type="entry name" value="Kinesin_motor_CS"/>
</dbReference>
<dbReference type="InterPro" id="IPR001752">
    <property type="entry name" value="Kinesin_motor_dom"/>
</dbReference>
<dbReference type="InterPro" id="IPR036961">
    <property type="entry name" value="Kinesin_motor_dom_sf"/>
</dbReference>
<dbReference type="InterPro" id="IPR027417">
    <property type="entry name" value="P-loop_NTPase"/>
</dbReference>
<dbReference type="PANTHER" id="PTHR47970">
    <property type="entry name" value="KINESIN-LIKE PROTEIN KIF11"/>
    <property type="match status" value="1"/>
</dbReference>
<dbReference type="PANTHER" id="PTHR47970:SF32">
    <property type="entry name" value="KINESIN-LIKE PROTEIN KIN-5B"/>
    <property type="match status" value="1"/>
</dbReference>
<dbReference type="Pfam" id="PF00225">
    <property type="entry name" value="Kinesin"/>
    <property type="match status" value="1"/>
</dbReference>
<dbReference type="PRINTS" id="PR00380">
    <property type="entry name" value="KINESINHEAVY"/>
</dbReference>
<dbReference type="SMART" id="SM00129">
    <property type="entry name" value="KISc"/>
    <property type="match status" value="1"/>
</dbReference>
<dbReference type="SUPFAM" id="SSF52540">
    <property type="entry name" value="P-loop containing nucleoside triphosphate hydrolases"/>
    <property type="match status" value="1"/>
</dbReference>
<dbReference type="PROSITE" id="PS00411">
    <property type="entry name" value="KINESIN_MOTOR_1"/>
    <property type="match status" value="1"/>
</dbReference>
<dbReference type="PROSITE" id="PS50067">
    <property type="entry name" value="KINESIN_MOTOR_2"/>
    <property type="match status" value="1"/>
</dbReference>
<proteinExistence type="evidence at transcript level"/>
<feature type="chain" id="PRO_0000436269" description="Kinesin-like protein KIN-5B">
    <location>
        <begin position="1"/>
        <end position="1039"/>
    </location>
</feature>
<feature type="domain" description="Kinesin motor" evidence="3">
    <location>
        <begin position="48"/>
        <end position="390"/>
    </location>
</feature>
<feature type="region of interest" description="Disordered" evidence="4">
    <location>
        <begin position="1008"/>
        <end position="1039"/>
    </location>
</feature>
<feature type="compositionally biased region" description="Basic and acidic residues" evidence="4">
    <location>
        <begin position="1010"/>
        <end position="1020"/>
    </location>
</feature>
<feature type="binding site" evidence="3">
    <location>
        <begin position="134"/>
        <end position="141"/>
    </location>
    <ligand>
        <name>ATP</name>
        <dbReference type="ChEBI" id="CHEBI:30616"/>
    </ligand>
</feature>
<protein>
    <recommendedName>
        <fullName evidence="7">Kinesin-like protein KIN-5B</fullName>
    </recommendedName>
    <alternativeName>
        <fullName evidence="5">AtKRP125a</fullName>
    </alternativeName>
</protein>